<evidence type="ECO:0000255" key="1">
    <source>
        <dbReference type="HAMAP-Rule" id="MF_01166"/>
    </source>
</evidence>
<name>ARNA_SALPK</name>
<protein>
    <recommendedName>
        <fullName evidence="1">Bifunctional polymyxin resistance protein ArnA</fullName>
    </recommendedName>
    <domain>
        <recommendedName>
            <fullName evidence="1">UDP-4-amino-4-deoxy-L-arabinose formyltransferase</fullName>
            <ecNumber evidence="1">2.1.2.13</ecNumber>
        </recommendedName>
        <alternativeName>
            <fullName evidence="1">ArnAFT</fullName>
        </alternativeName>
        <alternativeName>
            <fullName evidence="1">UDP-L-Ara4N formyltransferase</fullName>
        </alternativeName>
    </domain>
    <domain>
        <recommendedName>
            <fullName evidence="1">UDP-glucuronic acid oxidase, UDP-4-keto-hexauronic acid decarboxylating</fullName>
            <ecNumber evidence="1">1.1.1.305</ecNumber>
        </recommendedName>
        <alternativeName>
            <fullName evidence="1">ArnADH</fullName>
        </alternativeName>
        <alternativeName>
            <fullName evidence="1">UDP-GlcUA decarboxylase</fullName>
        </alternativeName>
        <alternativeName>
            <fullName evidence="1">UDP-glucuronic acid dehydrogenase</fullName>
        </alternativeName>
    </domain>
</protein>
<sequence length="660" mass="73428">MKAVIFAYHDMGCQGVQAVLDAGYEIAAIFTHADNPAENTFFGSVSRLAAGLGIPVYAPDNVNHPIWVDRIAELAPDIIFSFYYRNLLSEEILHLAPAGAFNLHGSLLPAYRGRAPLNWVLVNGESETGVTLHRMVKRADAGEIVASQRVAIAQDDVALTLHHKLCQAARQLLNSILPTMKCGNIPSVPQRESDATYYGRRRPEDGLIDWHKPVSTVHNLVRAVAAPWPGAFSYNGSQKFTIWSSRICPDAQGALPGSVISVSPLRVACADGALEIITGQAGDGITVQGSQLAQTLGLVAGACLNRPPATSGKRRIRVLILGVNGFIGNHLTERLLDEENYEVYGMDIGSNAISRFLLHPRFHFVEGDISIHSEWIEYHVKKCDVVLPLVAIATPIEYTRNPLRVFELDFEENLRIIRYCVKYRKRVVFPSTSEVYGMCTDASFDEDKSNLIVGPVNKPRWIYSVSKQLLDRVIWAYGEKEGLRFTLFRPFNWMGPRLDSLNAARIGSSRAITQLILNLVEGTPIKLIDGGQQKRCFTDIRDGIEALFRIIVNEGDRCDGKIINIGNPDNEASIQELATLLLDSFDKHPLRCHFPPFAGFQVVESRSYYGKGYQDVAHRKPSIDNARRCLDWEPSIAMRDTVEETLDFFLRSVDIAERAS</sequence>
<keyword id="KW-0046">Antibiotic resistance</keyword>
<keyword id="KW-0441">Lipid A biosynthesis</keyword>
<keyword id="KW-0444">Lipid biosynthesis</keyword>
<keyword id="KW-0443">Lipid metabolism</keyword>
<keyword id="KW-0448">Lipopolysaccharide biosynthesis</keyword>
<keyword id="KW-0511">Multifunctional enzyme</keyword>
<keyword id="KW-0520">NAD</keyword>
<keyword id="KW-0560">Oxidoreductase</keyword>
<keyword id="KW-0808">Transferase</keyword>
<gene>
    <name evidence="1" type="primary">arnA</name>
    <name type="ordered locus">SSPA0528</name>
</gene>
<reference key="1">
    <citation type="journal article" date="2009" name="BMC Genomics">
        <title>Pseudogene accumulation in the evolutionary histories of Salmonella enterica serovars Paratyphi A and Typhi.</title>
        <authorList>
            <person name="Holt K.E."/>
            <person name="Thomson N.R."/>
            <person name="Wain J."/>
            <person name="Langridge G.C."/>
            <person name="Hasan R."/>
            <person name="Bhutta Z.A."/>
            <person name="Quail M.A."/>
            <person name="Norbertczak H."/>
            <person name="Walker D."/>
            <person name="Simmonds M."/>
            <person name="White B."/>
            <person name="Bason N."/>
            <person name="Mungall K."/>
            <person name="Dougan G."/>
            <person name="Parkhill J."/>
        </authorList>
    </citation>
    <scope>NUCLEOTIDE SEQUENCE [LARGE SCALE GENOMIC DNA]</scope>
    <source>
        <strain>AKU_12601</strain>
    </source>
</reference>
<organism>
    <name type="scientific">Salmonella paratyphi A (strain AKU_12601)</name>
    <dbReference type="NCBI Taxonomy" id="554290"/>
    <lineage>
        <taxon>Bacteria</taxon>
        <taxon>Pseudomonadati</taxon>
        <taxon>Pseudomonadota</taxon>
        <taxon>Gammaproteobacteria</taxon>
        <taxon>Enterobacterales</taxon>
        <taxon>Enterobacteriaceae</taxon>
        <taxon>Salmonella</taxon>
    </lineage>
</organism>
<comment type="function">
    <text evidence="1">Bifunctional enzyme that catalyzes the oxidative decarboxylation of UDP-glucuronic acid (UDP-GlcUA) to UDP-4-keto-arabinose (UDP-Ara4O) and the addition of a formyl group to UDP-4-amino-4-deoxy-L-arabinose (UDP-L-Ara4N) to form UDP-L-4-formamido-arabinose (UDP-L-Ara4FN). The modified arabinose is attached to lipid A and is required for resistance to polymyxin and cationic antimicrobial peptides.</text>
</comment>
<comment type="catalytic activity">
    <reaction evidence="1">
        <text>UDP-alpha-D-glucuronate + NAD(+) = UDP-beta-L-threo-pentopyranos-4-ulose + CO2 + NADH</text>
        <dbReference type="Rhea" id="RHEA:24702"/>
        <dbReference type="ChEBI" id="CHEBI:16526"/>
        <dbReference type="ChEBI" id="CHEBI:57540"/>
        <dbReference type="ChEBI" id="CHEBI:57945"/>
        <dbReference type="ChEBI" id="CHEBI:58052"/>
        <dbReference type="ChEBI" id="CHEBI:58710"/>
        <dbReference type="EC" id="1.1.1.305"/>
    </reaction>
</comment>
<comment type="catalytic activity">
    <reaction evidence="1">
        <text>UDP-4-amino-4-deoxy-beta-L-arabinose + (6R)-10-formyltetrahydrofolate = UDP-4-deoxy-4-formamido-beta-L-arabinose + (6S)-5,6,7,8-tetrahydrofolate + H(+)</text>
        <dbReference type="Rhea" id="RHEA:24706"/>
        <dbReference type="ChEBI" id="CHEBI:15378"/>
        <dbReference type="ChEBI" id="CHEBI:57453"/>
        <dbReference type="ChEBI" id="CHEBI:58708"/>
        <dbReference type="ChEBI" id="CHEBI:58709"/>
        <dbReference type="ChEBI" id="CHEBI:195366"/>
        <dbReference type="EC" id="2.1.2.13"/>
    </reaction>
</comment>
<comment type="pathway">
    <text evidence="1">Nucleotide-sugar biosynthesis; UDP-4-deoxy-4-formamido-beta-L-arabinose biosynthesis; UDP-4-deoxy-4-formamido-beta-L-arabinose from UDP-alpha-D-glucuronate: step 1/3.</text>
</comment>
<comment type="pathway">
    <text evidence="1">Nucleotide-sugar biosynthesis; UDP-4-deoxy-4-formamido-beta-L-arabinose biosynthesis; UDP-4-deoxy-4-formamido-beta-L-arabinose from UDP-alpha-D-glucuronate: step 3/3.</text>
</comment>
<comment type="pathway">
    <text evidence="1">Bacterial outer membrane biogenesis; lipopolysaccharide biosynthesis.</text>
</comment>
<comment type="subunit">
    <text evidence="1">Homohexamer, formed by a dimer of trimers.</text>
</comment>
<comment type="similarity">
    <text evidence="1">In the N-terminal section; belongs to the Fmt family. UDP-L-Ara4N formyltransferase subfamily.</text>
</comment>
<comment type="similarity">
    <text evidence="1">In the C-terminal section; belongs to the NAD(P)-dependent epimerase/dehydratase family. UDP-glucuronic acid decarboxylase subfamily.</text>
</comment>
<dbReference type="EC" id="2.1.2.13" evidence="1"/>
<dbReference type="EC" id="1.1.1.305" evidence="1"/>
<dbReference type="EMBL" id="FM200053">
    <property type="protein sequence ID" value="CAR58657.1"/>
    <property type="molecule type" value="Genomic_DNA"/>
</dbReference>
<dbReference type="RefSeq" id="WP_000648774.1">
    <property type="nucleotide sequence ID" value="NC_011147.1"/>
</dbReference>
<dbReference type="SMR" id="B5BCP6"/>
<dbReference type="KEGG" id="sek:SSPA0528"/>
<dbReference type="HOGENOM" id="CLU_007383_23_2_6"/>
<dbReference type="UniPathway" id="UPA00030"/>
<dbReference type="UniPathway" id="UPA00032">
    <property type="reaction ID" value="UER00492"/>
</dbReference>
<dbReference type="UniPathway" id="UPA00032">
    <property type="reaction ID" value="UER00494"/>
</dbReference>
<dbReference type="Proteomes" id="UP000001869">
    <property type="component" value="Chromosome"/>
</dbReference>
<dbReference type="GO" id="GO:0016020">
    <property type="term" value="C:membrane"/>
    <property type="evidence" value="ECO:0007669"/>
    <property type="project" value="GOC"/>
</dbReference>
<dbReference type="GO" id="GO:0016831">
    <property type="term" value="F:carboxy-lyase activity"/>
    <property type="evidence" value="ECO:0007669"/>
    <property type="project" value="InterPro"/>
</dbReference>
<dbReference type="GO" id="GO:0099619">
    <property type="term" value="F:UDP-4-amino-4-deoxy-L-arabinose formyltransferase activity"/>
    <property type="evidence" value="ECO:0007669"/>
    <property type="project" value="UniProtKB-EC"/>
</dbReference>
<dbReference type="GO" id="GO:0099618">
    <property type="term" value="F:UDP-glucuronate dehydrogenase activity"/>
    <property type="evidence" value="ECO:0007669"/>
    <property type="project" value="UniProtKB-EC"/>
</dbReference>
<dbReference type="GO" id="GO:0009245">
    <property type="term" value="P:lipid A biosynthetic process"/>
    <property type="evidence" value="ECO:0007669"/>
    <property type="project" value="UniProtKB-KW"/>
</dbReference>
<dbReference type="GO" id="GO:0009103">
    <property type="term" value="P:lipopolysaccharide biosynthetic process"/>
    <property type="evidence" value="ECO:0007669"/>
    <property type="project" value="UniProtKB-UniRule"/>
</dbReference>
<dbReference type="GO" id="GO:0046677">
    <property type="term" value="P:response to antibiotic"/>
    <property type="evidence" value="ECO:0007669"/>
    <property type="project" value="UniProtKB-KW"/>
</dbReference>
<dbReference type="CDD" id="cd08702">
    <property type="entry name" value="Arna_FMT_C"/>
    <property type="match status" value="1"/>
</dbReference>
<dbReference type="CDD" id="cd05257">
    <property type="entry name" value="Arna_like_SDR_e"/>
    <property type="match status" value="1"/>
</dbReference>
<dbReference type="FunFam" id="3.40.50.720:FF:000197">
    <property type="entry name" value="Bifunctional polymyxin resistance protein ArnA"/>
    <property type="match status" value="1"/>
</dbReference>
<dbReference type="Gene3D" id="3.40.50.12230">
    <property type="match status" value="1"/>
</dbReference>
<dbReference type="Gene3D" id="3.40.50.720">
    <property type="entry name" value="NAD(P)-binding Rossmann-like Domain"/>
    <property type="match status" value="1"/>
</dbReference>
<dbReference type="HAMAP" id="MF_01166">
    <property type="entry name" value="ArnA"/>
    <property type="match status" value="1"/>
</dbReference>
<dbReference type="InterPro" id="IPR045869">
    <property type="entry name" value="Arna-like_SDR_e"/>
</dbReference>
<dbReference type="InterPro" id="IPR021168">
    <property type="entry name" value="Bifun_polymyxin_resist_ArnA"/>
</dbReference>
<dbReference type="InterPro" id="IPR001509">
    <property type="entry name" value="Epimerase_deHydtase"/>
</dbReference>
<dbReference type="InterPro" id="IPR005793">
    <property type="entry name" value="Formyl_trans_C"/>
</dbReference>
<dbReference type="InterPro" id="IPR002376">
    <property type="entry name" value="Formyl_transf_N"/>
</dbReference>
<dbReference type="InterPro" id="IPR036477">
    <property type="entry name" value="Formyl_transf_N_sf"/>
</dbReference>
<dbReference type="InterPro" id="IPR011034">
    <property type="entry name" value="Formyl_transferase-like_C_sf"/>
</dbReference>
<dbReference type="InterPro" id="IPR050177">
    <property type="entry name" value="Lipid_A_modif_metabolic_enz"/>
</dbReference>
<dbReference type="InterPro" id="IPR036291">
    <property type="entry name" value="NAD(P)-bd_dom_sf"/>
</dbReference>
<dbReference type="NCBIfam" id="NF005414">
    <property type="entry name" value="PRK06988.1"/>
    <property type="match status" value="1"/>
</dbReference>
<dbReference type="NCBIfam" id="NF005998">
    <property type="entry name" value="PRK08125.1"/>
    <property type="match status" value="1"/>
</dbReference>
<dbReference type="NCBIfam" id="NF008872">
    <property type="entry name" value="PRK11908.1"/>
    <property type="match status" value="1"/>
</dbReference>
<dbReference type="PANTHER" id="PTHR43245">
    <property type="entry name" value="BIFUNCTIONAL POLYMYXIN RESISTANCE PROTEIN ARNA"/>
    <property type="match status" value="1"/>
</dbReference>
<dbReference type="PANTHER" id="PTHR43245:SF13">
    <property type="entry name" value="UDP-D-APIOSE_UDP-D-XYLOSE SYNTHASE 2"/>
    <property type="match status" value="1"/>
</dbReference>
<dbReference type="Pfam" id="PF01370">
    <property type="entry name" value="Epimerase"/>
    <property type="match status" value="1"/>
</dbReference>
<dbReference type="Pfam" id="PF02911">
    <property type="entry name" value="Formyl_trans_C"/>
    <property type="match status" value="1"/>
</dbReference>
<dbReference type="Pfam" id="PF00551">
    <property type="entry name" value="Formyl_trans_N"/>
    <property type="match status" value="1"/>
</dbReference>
<dbReference type="PIRSF" id="PIRSF036506">
    <property type="entry name" value="Bifun_polymyxin_resist_ArnA"/>
    <property type="match status" value="1"/>
</dbReference>
<dbReference type="SUPFAM" id="SSF50486">
    <property type="entry name" value="FMT C-terminal domain-like"/>
    <property type="match status" value="1"/>
</dbReference>
<dbReference type="SUPFAM" id="SSF53328">
    <property type="entry name" value="Formyltransferase"/>
    <property type="match status" value="1"/>
</dbReference>
<dbReference type="SUPFAM" id="SSF51735">
    <property type="entry name" value="NAD(P)-binding Rossmann-fold domains"/>
    <property type="match status" value="1"/>
</dbReference>
<feature type="chain" id="PRO_1000137951" description="Bifunctional polymyxin resistance protein ArnA">
    <location>
        <begin position="1"/>
        <end position="660"/>
    </location>
</feature>
<feature type="region of interest" description="Formyltransferase ArnAFT">
    <location>
        <begin position="1"/>
        <end position="304"/>
    </location>
</feature>
<feature type="region of interest" description="Dehydrogenase ArnADH">
    <location>
        <begin position="314"/>
        <end position="660"/>
    </location>
</feature>
<feature type="active site" description="Proton donor; for formyltransferase activity" evidence="1">
    <location>
        <position position="104"/>
    </location>
</feature>
<feature type="active site" description="Proton acceptor; for decarboxylase activity" evidence="1">
    <location>
        <position position="434"/>
    </location>
</feature>
<feature type="active site" description="Proton donor; for decarboxylase activity" evidence="1">
    <location>
        <position position="619"/>
    </location>
</feature>
<feature type="binding site" evidence="1">
    <location>
        <position position="114"/>
    </location>
    <ligand>
        <name>(6R)-10-formyltetrahydrofolate</name>
        <dbReference type="ChEBI" id="CHEBI:195366"/>
    </ligand>
</feature>
<feature type="binding site" evidence="1">
    <location>
        <begin position="136"/>
        <end position="140"/>
    </location>
    <ligand>
        <name>(6R)-10-formyltetrahydrofolate</name>
        <dbReference type="ChEBI" id="CHEBI:195366"/>
    </ligand>
</feature>
<feature type="binding site" evidence="1">
    <location>
        <position position="347"/>
    </location>
    <ligand>
        <name>NAD(+)</name>
        <dbReference type="ChEBI" id="CHEBI:57540"/>
    </ligand>
</feature>
<feature type="binding site" evidence="1">
    <location>
        <begin position="368"/>
        <end position="369"/>
    </location>
    <ligand>
        <name>NAD(+)</name>
        <dbReference type="ChEBI" id="CHEBI:57540"/>
    </ligand>
</feature>
<feature type="binding site" evidence="1">
    <location>
        <position position="393"/>
    </location>
    <ligand>
        <name>UDP-alpha-D-glucuronate</name>
        <dbReference type="ChEBI" id="CHEBI:58052"/>
    </ligand>
</feature>
<feature type="binding site" evidence="1">
    <location>
        <position position="398"/>
    </location>
    <ligand>
        <name>UDP-alpha-D-glucuronate</name>
        <dbReference type="ChEBI" id="CHEBI:58052"/>
    </ligand>
</feature>
<feature type="binding site" evidence="1">
    <location>
        <begin position="432"/>
        <end position="433"/>
    </location>
    <ligand>
        <name>UDP-alpha-D-glucuronate</name>
        <dbReference type="ChEBI" id="CHEBI:58052"/>
    </ligand>
</feature>
<feature type="binding site" evidence="1">
    <location>
        <position position="460"/>
    </location>
    <ligand>
        <name>UDP-alpha-D-glucuronate</name>
        <dbReference type="ChEBI" id="CHEBI:58052"/>
    </ligand>
</feature>
<feature type="binding site" evidence="1">
    <location>
        <position position="492"/>
    </location>
    <ligand>
        <name>UDP-alpha-D-glucuronate</name>
        <dbReference type="ChEBI" id="CHEBI:58052"/>
    </ligand>
</feature>
<feature type="binding site" evidence="1">
    <location>
        <begin position="526"/>
        <end position="535"/>
    </location>
    <ligand>
        <name>UDP-alpha-D-glucuronate</name>
        <dbReference type="ChEBI" id="CHEBI:58052"/>
    </ligand>
</feature>
<feature type="binding site" evidence="1">
    <location>
        <position position="613"/>
    </location>
    <ligand>
        <name>UDP-alpha-D-glucuronate</name>
        <dbReference type="ChEBI" id="CHEBI:58052"/>
    </ligand>
</feature>
<feature type="site" description="Transition state stabilizer" evidence="1">
    <location>
        <position position="102"/>
    </location>
</feature>
<feature type="site" description="Raises pKa of active site His" evidence="1">
    <location>
        <position position="140"/>
    </location>
</feature>
<proteinExistence type="inferred from homology"/>
<accession>B5BCP6</accession>